<protein>
    <recommendedName>
        <fullName>Uncharacterized protein Mb2951c</fullName>
    </recommendedName>
</protein>
<feature type="chain" id="PRO_0000104107" description="Uncharacterized protein Mb2951c">
    <location>
        <begin position="1"/>
        <end position="207"/>
    </location>
</feature>
<sequence>MDLGGVRRRISLMARQHGPTAQRHVASPMTVDIARLGRRPGAMFELHDTVHSPARIGLELIAIDQGALLDLDLRVESVSEGVLVTGTVAAPTVGECARCLSPVRGRVQVALTELFAYPDSATDETTEEDEVGRVVDETIDLEQPIIDAVGLELPFSPVCRPDCPGLCPQCGVPLASEPGHRHEQIDPRWAKLVEMLGPESDTLRGER</sequence>
<comment type="similarity">
    <text evidence="1">To M.leprae ML1660.</text>
</comment>
<gene>
    <name type="ordered locus">BQ2027_MB2951C</name>
</gene>
<evidence type="ECO:0000305" key="1"/>
<dbReference type="EMBL" id="LT708304">
    <property type="protein sequence ID" value="SIU01572.1"/>
    <property type="molecule type" value="Genomic_DNA"/>
</dbReference>
<dbReference type="RefSeq" id="NP_856596.1">
    <property type="nucleotide sequence ID" value="NC_002945.3"/>
</dbReference>
<dbReference type="KEGG" id="mbo:BQ2027_MB2951C"/>
<dbReference type="PATRIC" id="fig|233413.5.peg.3238"/>
<dbReference type="Proteomes" id="UP000001419">
    <property type="component" value="Chromosome"/>
</dbReference>
<dbReference type="InterPro" id="IPR003772">
    <property type="entry name" value="YceD"/>
</dbReference>
<dbReference type="PANTHER" id="PTHR34374">
    <property type="entry name" value="LARGE RIBOSOMAL RNA SUBUNIT ACCUMULATION PROTEIN YCED HOMOLOG 1, CHLOROPLASTIC"/>
    <property type="match status" value="1"/>
</dbReference>
<dbReference type="PANTHER" id="PTHR34374:SF1">
    <property type="entry name" value="LARGE RIBOSOMAL RNA SUBUNIT ACCUMULATION PROTEIN YCED HOMOLOG 1, CHLOROPLASTIC"/>
    <property type="match status" value="1"/>
</dbReference>
<dbReference type="Pfam" id="PF02620">
    <property type="entry name" value="YceD"/>
    <property type="match status" value="1"/>
</dbReference>
<reference key="1">
    <citation type="journal article" date="2003" name="Proc. Natl. Acad. Sci. U.S.A.">
        <title>The complete genome sequence of Mycobacterium bovis.</title>
        <authorList>
            <person name="Garnier T."/>
            <person name="Eiglmeier K."/>
            <person name="Camus J.-C."/>
            <person name="Medina N."/>
            <person name="Mansoor H."/>
            <person name="Pryor M."/>
            <person name="Duthoy S."/>
            <person name="Grondin S."/>
            <person name="Lacroix C."/>
            <person name="Monsempe C."/>
            <person name="Simon S."/>
            <person name="Harris B."/>
            <person name="Atkin R."/>
            <person name="Doggett J."/>
            <person name="Mayes R."/>
            <person name="Keating L."/>
            <person name="Wheeler P.R."/>
            <person name="Parkhill J."/>
            <person name="Barrell B.G."/>
            <person name="Cole S.T."/>
            <person name="Gordon S.V."/>
            <person name="Hewinson R.G."/>
        </authorList>
    </citation>
    <scope>NUCLEOTIDE SEQUENCE [LARGE SCALE GENOMIC DNA]</scope>
    <source>
        <strain>ATCC BAA-935 / AF2122/97</strain>
    </source>
</reference>
<reference key="2">
    <citation type="journal article" date="2017" name="Genome Announc.">
        <title>Updated reference genome sequence and annotation of Mycobacterium bovis AF2122/97.</title>
        <authorList>
            <person name="Malone K.M."/>
            <person name="Farrell D."/>
            <person name="Stuber T.P."/>
            <person name="Schubert O.T."/>
            <person name="Aebersold R."/>
            <person name="Robbe-Austerman S."/>
            <person name="Gordon S.V."/>
        </authorList>
    </citation>
    <scope>NUCLEOTIDE SEQUENCE [LARGE SCALE GENOMIC DNA]</scope>
    <scope>GENOME REANNOTATION</scope>
    <source>
        <strain>ATCC BAA-935 / AF2122/97</strain>
    </source>
</reference>
<name>Y2951_MYCBO</name>
<accession>P65058</accession>
<accession>A0A1R3Y2K5</accession>
<accession>Q10972</accession>
<accession>X2BM68</accession>
<keyword id="KW-1185">Reference proteome</keyword>
<organism>
    <name type="scientific">Mycobacterium bovis (strain ATCC BAA-935 / AF2122/97)</name>
    <dbReference type="NCBI Taxonomy" id="233413"/>
    <lineage>
        <taxon>Bacteria</taxon>
        <taxon>Bacillati</taxon>
        <taxon>Actinomycetota</taxon>
        <taxon>Actinomycetes</taxon>
        <taxon>Mycobacteriales</taxon>
        <taxon>Mycobacteriaceae</taxon>
        <taxon>Mycobacterium</taxon>
        <taxon>Mycobacterium tuberculosis complex</taxon>
    </lineage>
</organism>
<proteinExistence type="predicted"/>